<name>YKNV_BACSU</name>
<gene>
    <name type="primary">yknV</name>
    <name type="ordered locus">BSU14330</name>
</gene>
<keyword id="KW-0067">ATP-binding</keyword>
<keyword id="KW-1003">Cell membrane</keyword>
<keyword id="KW-0472">Membrane</keyword>
<keyword id="KW-0547">Nucleotide-binding</keyword>
<keyword id="KW-1185">Reference proteome</keyword>
<keyword id="KW-0812">Transmembrane</keyword>
<keyword id="KW-1133">Transmembrane helix</keyword>
<keyword id="KW-0813">Transport</keyword>
<dbReference type="EMBL" id="AF012285">
    <property type="protein sequence ID" value="AAC24907.1"/>
    <property type="molecule type" value="Genomic_DNA"/>
</dbReference>
<dbReference type="EMBL" id="AL009126">
    <property type="protein sequence ID" value="CAB13306.1"/>
    <property type="molecule type" value="Genomic_DNA"/>
</dbReference>
<dbReference type="PIR" id="A69858">
    <property type="entry name" value="A69858"/>
</dbReference>
<dbReference type="RefSeq" id="NP_389316.1">
    <property type="nucleotide sequence ID" value="NC_000964.3"/>
</dbReference>
<dbReference type="RefSeq" id="WP_003232362.1">
    <property type="nucleotide sequence ID" value="NZ_OZ025638.1"/>
</dbReference>
<dbReference type="SMR" id="O31708"/>
<dbReference type="FunCoup" id="O31708">
    <property type="interactions" value="659"/>
</dbReference>
<dbReference type="STRING" id="224308.BSU14330"/>
<dbReference type="PaxDb" id="224308-BSU14330"/>
<dbReference type="EnsemblBacteria" id="CAB13306">
    <property type="protein sequence ID" value="CAB13306"/>
    <property type="gene ID" value="BSU_14330"/>
</dbReference>
<dbReference type="GeneID" id="936087"/>
<dbReference type="KEGG" id="bsu:BSU14330"/>
<dbReference type="PATRIC" id="fig|224308.179.peg.1563"/>
<dbReference type="eggNOG" id="COG1132">
    <property type="taxonomic scope" value="Bacteria"/>
</dbReference>
<dbReference type="InParanoid" id="O31708"/>
<dbReference type="OrthoDB" id="9770415at2"/>
<dbReference type="PhylomeDB" id="O31708"/>
<dbReference type="BioCyc" id="BSUB:BSU14330-MONOMER"/>
<dbReference type="Proteomes" id="UP000001570">
    <property type="component" value="Chromosome"/>
</dbReference>
<dbReference type="GO" id="GO:0005886">
    <property type="term" value="C:plasma membrane"/>
    <property type="evidence" value="ECO:0007669"/>
    <property type="project" value="UniProtKB-SubCell"/>
</dbReference>
<dbReference type="GO" id="GO:0140359">
    <property type="term" value="F:ABC-type transporter activity"/>
    <property type="evidence" value="ECO:0007669"/>
    <property type="project" value="InterPro"/>
</dbReference>
<dbReference type="GO" id="GO:0005524">
    <property type="term" value="F:ATP binding"/>
    <property type="evidence" value="ECO:0007669"/>
    <property type="project" value="UniProtKB-KW"/>
</dbReference>
<dbReference type="GO" id="GO:0016887">
    <property type="term" value="F:ATP hydrolysis activity"/>
    <property type="evidence" value="ECO:0007669"/>
    <property type="project" value="InterPro"/>
</dbReference>
<dbReference type="GO" id="GO:0034040">
    <property type="term" value="F:ATPase-coupled lipid transmembrane transporter activity"/>
    <property type="evidence" value="ECO:0000318"/>
    <property type="project" value="GO_Central"/>
</dbReference>
<dbReference type="GO" id="GO:0055085">
    <property type="term" value="P:transmembrane transport"/>
    <property type="evidence" value="ECO:0000318"/>
    <property type="project" value="GO_Central"/>
</dbReference>
<dbReference type="CDD" id="cd18545">
    <property type="entry name" value="ABC_6TM_YknV_like"/>
    <property type="match status" value="1"/>
</dbReference>
<dbReference type="CDD" id="cd03254">
    <property type="entry name" value="ABCC_Glucan_exporter_like"/>
    <property type="match status" value="1"/>
</dbReference>
<dbReference type="FunFam" id="1.20.1560.10:FF:000011">
    <property type="entry name" value="Multidrug ABC transporter ATP-binding protein"/>
    <property type="match status" value="1"/>
</dbReference>
<dbReference type="FunFam" id="3.40.50.300:FF:000287">
    <property type="entry name" value="Multidrug ABC transporter ATP-binding protein"/>
    <property type="match status" value="1"/>
</dbReference>
<dbReference type="Gene3D" id="1.20.1560.10">
    <property type="entry name" value="ABC transporter type 1, transmembrane domain"/>
    <property type="match status" value="1"/>
</dbReference>
<dbReference type="Gene3D" id="3.40.50.300">
    <property type="entry name" value="P-loop containing nucleotide triphosphate hydrolases"/>
    <property type="match status" value="1"/>
</dbReference>
<dbReference type="InterPro" id="IPR003593">
    <property type="entry name" value="AAA+_ATPase"/>
</dbReference>
<dbReference type="InterPro" id="IPR011527">
    <property type="entry name" value="ABC1_TM_dom"/>
</dbReference>
<dbReference type="InterPro" id="IPR036640">
    <property type="entry name" value="ABC1_TM_sf"/>
</dbReference>
<dbReference type="InterPro" id="IPR003439">
    <property type="entry name" value="ABC_transporter-like_ATP-bd"/>
</dbReference>
<dbReference type="InterPro" id="IPR017871">
    <property type="entry name" value="ABC_transporter-like_CS"/>
</dbReference>
<dbReference type="InterPro" id="IPR027417">
    <property type="entry name" value="P-loop_NTPase"/>
</dbReference>
<dbReference type="InterPro" id="IPR039421">
    <property type="entry name" value="Type_1_exporter"/>
</dbReference>
<dbReference type="PANTHER" id="PTHR43394:SF1">
    <property type="entry name" value="ATP-BINDING CASSETTE SUB-FAMILY B MEMBER 10, MITOCHONDRIAL"/>
    <property type="match status" value="1"/>
</dbReference>
<dbReference type="PANTHER" id="PTHR43394">
    <property type="entry name" value="ATP-DEPENDENT PERMEASE MDL1, MITOCHONDRIAL"/>
    <property type="match status" value="1"/>
</dbReference>
<dbReference type="Pfam" id="PF00664">
    <property type="entry name" value="ABC_membrane"/>
    <property type="match status" value="1"/>
</dbReference>
<dbReference type="Pfam" id="PF00005">
    <property type="entry name" value="ABC_tran"/>
    <property type="match status" value="1"/>
</dbReference>
<dbReference type="SMART" id="SM00382">
    <property type="entry name" value="AAA"/>
    <property type="match status" value="1"/>
</dbReference>
<dbReference type="SUPFAM" id="SSF90123">
    <property type="entry name" value="ABC transporter transmembrane region"/>
    <property type="match status" value="1"/>
</dbReference>
<dbReference type="SUPFAM" id="SSF52540">
    <property type="entry name" value="P-loop containing nucleoside triphosphate hydrolases"/>
    <property type="match status" value="1"/>
</dbReference>
<dbReference type="PROSITE" id="PS50929">
    <property type="entry name" value="ABC_TM1F"/>
    <property type="match status" value="1"/>
</dbReference>
<dbReference type="PROSITE" id="PS00211">
    <property type="entry name" value="ABC_TRANSPORTER_1"/>
    <property type="match status" value="1"/>
</dbReference>
<dbReference type="PROSITE" id="PS50893">
    <property type="entry name" value="ABC_TRANSPORTER_2"/>
    <property type="match status" value="1"/>
</dbReference>
<comment type="subcellular location">
    <subcellularLocation>
        <location evidence="1">Cell membrane</location>
        <topology evidence="3">Multi-pass membrane protein</topology>
    </subcellularLocation>
</comment>
<comment type="similarity">
    <text evidence="4">Belongs to the ABC transporter superfamily.</text>
</comment>
<feature type="chain" id="PRO_0000360203" description="Uncharacterized ABC transporter ATP-binding protein YknV">
    <location>
        <begin position="1"/>
        <end position="604"/>
    </location>
</feature>
<feature type="transmembrane region" description="Helical" evidence="3">
    <location>
        <begin position="49"/>
        <end position="69"/>
    </location>
</feature>
<feature type="transmembrane region" description="Helical" evidence="3">
    <location>
        <begin position="82"/>
        <end position="102"/>
    </location>
</feature>
<feature type="transmembrane region" description="Helical" evidence="3">
    <location>
        <begin position="162"/>
        <end position="182"/>
    </location>
</feature>
<feature type="transmembrane region" description="Helical" evidence="3">
    <location>
        <begin position="184"/>
        <end position="204"/>
    </location>
</feature>
<feature type="transmembrane region" description="Helical" evidence="3">
    <location>
        <begin position="273"/>
        <end position="293"/>
    </location>
</feature>
<feature type="transmembrane region" description="Helical" evidence="3">
    <location>
        <begin position="297"/>
        <end position="317"/>
    </location>
</feature>
<feature type="domain" description="ABC transmembrane type-1" evidence="3">
    <location>
        <begin position="45"/>
        <end position="329"/>
    </location>
</feature>
<feature type="domain" description="ABC transporter" evidence="2">
    <location>
        <begin position="363"/>
        <end position="597"/>
    </location>
</feature>
<feature type="binding site" evidence="2">
    <location>
        <begin position="396"/>
        <end position="403"/>
    </location>
    <ligand>
        <name>ATP</name>
        <dbReference type="ChEBI" id="CHEBI:30616"/>
    </ligand>
</feature>
<organism>
    <name type="scientific">Bacillus subtilis (strain 168)</name>
    <dbReference type="NCBI Taxonomy" id="224308"/>
    <lineage>
        <taxon>Bacteria</taxon>
        <taxon>Bacillati</taxon>
        <taxon>Bacillota</taxon>
        <taxon>Bacilli</taxon>
        <taxon>Bacillales</taxon>
        <taxon>Bacillaceae</taxon>
        <taxon>Bacillus</taxon>
    </lineage>
</organism>
<protein>
    <recommendedName>
        <fullName>Uncharacterized ABC transporter ATP-binding protein YknV</fullName>
    </recommendedName>
</protein>
<proteinExistence type="inferred from homology"/>
<evidence type="ECO:0000250" key="1"/>
<evidence type="ECO:0000255" key="2">
    <source>
        <dbReference type="PROSITE-ProRule" id="PRU00434"/>
    </source>
</evidence>
<evidence type="ECO:0000255" key="3">
    <source>
        <dbReference type="PROSITE-ProRule" id="PRU00441"/>
    </source>
</evidence>
<evidence type="ECO:0000305" key="4"/>
<reference key="1">
    <citation type="submission" date="1997-07" db="EMBL/GenBank/DDBJ databases">
        <title>Sequence analysis of the mobA-ampS region of the Bacillus subtilis chromosome.</title>
        <authorList>
            <person name="Caldwell R.M."/>
            <person name="Ferrari E."/>
        </authorList>
    </citation>
    <scope>NUCLEOTIDE SEQUENCE [GENOMIC DNA]</scope>
    <source>
        <strain>168</strain>
    </source>
</reference>
<reference key="2">
    <citation type="journal article" date="1997" name="Nature">
        <title>The complete genome sequence of the Gram-positive bacterium Bacillus subtilis.</title>
        <authorList>
            <person name="Kunst F."/>
            <person name="Ogasawara N."/>
            <person name="Moszer I."/>
            <person name="Albertini A.M."/>
            <person name="Alloni G."/>
            <person name="Azevedo V."/>
            <person name="Bertero M.G."/>
            <person name="Bessieres P."/>
            <person name="Bolotin A."/>
            <person name="Borchert S."/>
            <person name="Borriss R."/>
            <person name="Boursier L."/>
            <person name="Brans A."/>
            <person name="Braun M."/>
            <person name="Brignell S.C."/>
            <person name="Bron S."/>
            <person name="Brouillet S."/>
            <person name="Bruschi C.V."/>
            <person name="Caldwell B."/>
            <person name="Capuano V."/>
            <person name="Carter N.M."/>
            <person name="Choi S.-K."/>
            <person name="Codani J.-J."/>
            <person name="Connerton I.F."/>
            <person name="Cummings N.J."/>
            <person name="Daniel R.A."/>
            <person name="Denizot F."/>
            <person name="Devine K.M."/>
            <person name="Duesterhoeft A."/>
            <person name="Ehrlich S.D."/>
            <person name="Emmerson P.T."/>
            <person name="Entian K.-D."/>
            <person name="Errington J."/>
            <person name="Fabret C."/>
            <person name="Ferrari E."/>
            <person name="Foulger D."/>
            <person name="Fritz C."/>
            <person name="Fujita M."/>
            <person name="Fujita Y."/>
            <person name="Fuma S."/>
            <person name="Galizzi A."/>
            <person name="Galleron N."/>
            <person name="Ghim S.-Y."/>
            <person name="Glaser P."/>
            <person name="Goffeau A."/>
            <person name="Golightly E.J."/>
            <person name="Grandi G."/>
            <person name="Guiseppi G."/>
            <person name="Guy B.J."/>
            <person name="Haga K."/>
            <person name="Haiech J."/>
            <person name="Harwood C.R."/>
            <person name="Henaut A."/>
            <person name="Hilbert H."/>
            <person name="Holsappel S."/>
            <person name="Hosono S."/>
            <person name="Hullo M.-F."/>
            <person name="Itaya M."/>
            <person name="Jones L.-M."/>
            <person name="Joris B."/>
            <person name="Karamata D."/>
            <person name="Kasahara Y."/>
            <person name="Klaerr-Blanchard M."/>
            <person name="Klein C."/>
            <person name="Kobayashi Y."/>
            <person name="Koetter P."/>
            <person name="Koningstein G."/>
            <person name="Krogh S."/>
            <person name="Kumano M."/>
            <person name="Kurita K."/>
            <person name="Lapidus A."/>
            <person name="Lardinois S."/>
            <person name="Lauber J."/>
            <person name="Lazarevic V."/>
            <person name="Lee S.-M."/>
            <person name="Levine A."/>
            <person name="Liu H."/>
            <person name="Masuda S."/>
            <person name="Mauel C."/>
            <person name="Medigue C."/>
            <person name="Medina N."/>
            <person name="Mellado R.P."/>
            <person name="Mizuno M."/>
            <person name="Moestl D."/>
            <person name="Nakai S."/>
            <person name="Noback M."/>
            <person name="Noone D."/>
            <person name="O'Reilly M."/>
            <person name="Ogawa K."/>
            <person name="Ogiwara A."/>
            <person name="Oudega B."/>
            <person name="Park S.-H."/>
            <person name="Parro V."/>
            <person name="Pohl T.M."/>
            <person name="Portetelle D."/>
            <person name="Porwollik S."/>
            <person name="Prescott A.M."/>
            <person name="Presecan E."/>
            <person name="Pujic P."/>
            <person name="Purnelle B."/>
            <person name="Rapoport G."/>
            <person name="Rey M."/>
            <person name="Reynolds S."/>
            <person name="Rieger M."/>
            <person name="Rivolta C."/>
            <person name="Rocha E."/>
            <person name="Roche B."/>
            <person name="Rose M."/>
            <person name="Sadaie Y."/>
            <person name="Sato T."/>
            <person name="Scanlan E."/>
            <person name="Schleich S."/>
            <person name="Schroeter R."/>
            <person name="Scoffone F."/>
            <person name="Sekiguchi J."/>
            <person name="Sekowska A."/>
            <person name="Seror S.J."/>
            <person name="Serror P."/>
            <person name="Shin B.-S."/>
            <person name="Soldo B."/>
            <person name="Sorokin A."/>
            <person name="Tacconi E."/>
            <person name="Takagi T."/>
            <person name="Takahashi H."/>
            <person name="Takemaru K."/>
            <person name="Takeuchi M."/>
            <person name="Tamakoshi A."/>
            <person name="Tanaka T."/>
            <person name="Terpstra P."/>
            <person name="Tognoni A."/>
            <person name="Tosato V."/>
            <person name="Uchiyama S."/>
            <person name="Vandenbol M."/>
            <person name="Vannier F."/>
            <person name="Vassarotti A."/>
            <person name="Viari A."/>
            <person name="Wambutt R."/>
            <person name="Wedler E."/>
            <person name="Wedler H."/>
            <person name="Weitzenegger T."/>
            <person name="Winters P."/>
            <person name="Wipat A."/>
            <person name="Yamamoto H."/>
            <person name="Yamane K."/>
            <person name="Yasumoto K."/>
            <person name="Yata K."/>
            <person name="Yoshida K."/>
            <person name="Yoshikawa H.-F."/>
            <person name="Zumstein E."/>
            <person name="Yoshikawa H."/>
            <person name="Danchin A."/>
        </authorList>
    </citation>
    <scope>NUCLEOTIDE SEQUENCE [LARGE SCALE GENOMIC DNA]</scope>
    <source>
        <strain>168</strain>
    </source>
</reference>
<accession>O31708</accession>
<accession>Q7BVS0</accession>
<sequence>MKQAKKQGVLERFYYSSDEIIEKPFNWAQMWRLLSYVKPYRKTILPLSFLTVLIGTAVKLVIPILIGVYVLDQAITGRNSELLIQLIFIISGLYVLNYAANVLRIRWMNQLGQHVIYDLRQHLFTHVQRLSHRFFDQRSAGSILVRIMNDINSLQELFTSGVINLLTDLLLLAGVIIILFTLSPELTIAIMVTLPIMFFISTSLRKKIRRSWQTVRLKQSKLNSHLNESIQGIRVTQAFTQEEENMAYFDGVNQENYESWREATRKNAMFRPLVEMTNAIGTAVLIWYGATLIMNETITIGVFVSFAFYLGMFWEPISRLGQVYNQLLMGMASSERIFEFLDEQPNVKEKPNAIHNEKINGEISFEEVEFSYDEKRKALHAVSFSIPAGSTLALVGHTGSGKTTIANLISRFYDAAGGTIKIDGIPIKDLSLASLRSQISIVLQDTFIFSGTIMENIRFGRPNASDEEVMKASQAVGADEFISDLAEGYATEVEERGSVLSAGQRQLISFARALLADPAIIILDEATASIDTETEVKIQQALKTLLKGRTAVMIAHRLSTIRDADRIIVLDHGRKIEEGNHDQLLAKGGIYAGLVKAQYSTAIE</sequence>